<reference key="1">
    <citation type="journal article" date="2015" name="Plant Physiol.">
        <title>Functional divergence of diterpene syntheses in the medicinal plant Salvia miltiorrhiza.</title>
        <authorList>
            <person name="Cui G."/>
            <person name="Duan L."/>
            <person name="Jin B."/>
            <person name="Qian J."/>
            <person name="Xue Z."/>
            <person name="Shen G."/>
            <person name="Snyder J.H."/>
            <person name="Song J."/>
            <person name="Chen S."/>
            <person name="Huang L."/>
            <person name="Peters R.J."/>
            <person name="Qi X."/>
        </authorList>
    </citation>
    <scope>NUCLEOTIDE SEQUENCE [MRNA]</scope>
    <scope>FUNCTION</scope>
    <scope>CATALYTIC ACTIVITY</scope>
</reference>
<reference key="2">
    <citation type="journal article" date="2012" name="J. Exp. Bot.">
        <title>Genome-wide identification and characterization of novel genes involved in terpenoid biosynthesis in Salvia miltiorrhiza.</title>
        <authorList>
            <person name="Ma Y."/>
            <person name="Yuan L."/>
            <person name="Wu B."/>
            <person name="Li X."/>
            <person name="Chen S."/>
            <person name="Lu S."/>
        </authorList>
    </citation>
    <scope>NUCLEOTIDE SEQUENCE [GENOMIC DNA] OF 82-377 AND 386-776</scope>
</reference>
<keyword id="KW-0150">Chloroplast</keyword>
<keyword id="KW-0456">Lyase</keyword>
<keyword id="KW-0460">Magnesium</keyword>
<keyword id="KW-0479">Metal-binding</keyword>
<keyword id="KW-0934">Plastid</keyword>
<keyword id="KW-0809">Transit peptide</keyword>
<comment type="function">
    <text evidence="5">Involved in diterpenoid biosynthesis (PubMed:26077765). Catalyzes the conversion of all-trans-geranylgeranyl diphosphate to ent-8alpha-hydroxylabd-13-en-15-yl diphosphate (PubMed:26077765).</text>
</comment>
<comment type="catalytic activity">
    <reaction evidence="5">
        <text>ent-8alpha-hydroxylabd-13-en-15-yl diphosphate = (2E,6E,10E)-geranylgeranyl diphosphate + H2O</text>
        <dbReference type="Rhea" id="RHEA:54648"/>
        <dbReference type="ChEBI" id="CHEBI:15377"/>
        <dbReference type="ChEBI" id="CHEBI:58756"/>
        <dbReference type="ChEBI" id="CHEBI:138223"/>
        <dbReference type="EC" id="4.2.1.173"/>
    </reaction>
    <physiologicalReaction direction="right-to-left" evidence="5">
        <dbReference type="Rhea" id="RHEA:54650"/>
    </physiologicalReaction>
</comment>
<comment type="cofactor">
    <cofactor evidence="3">
        <name>Mg(2+)</name>
        <dbReference type="ChEBI" id="CHEBI:18420"/>
    </cofactor>
</comment>
<comment type="pathway">
    <text evidence="7">Secondary metabolite biosynthesis; terpenoid biosynthesis.</text>
</comment>
<comment type="subcellular location">
    <subcellularLocation>
        <location evidence="4">Plastid</location>
        <location evidence="4">Chloroplast</location>
    </subcellularLocation>
</comment>
<comment type="domain">
    <text evidence="7">The Asp-Xaa-Asp-Asp (DXDD) motif is important for the catalytic activity, presumably through binding to Mg(2+).</text>
</comment>
<comment type="similarity">
    <text evidence="7">Belongs to the terpene synthase family.</text>
</comment>
<comment type="sequence caution" evidence="7">
    <conflict type="erroneous gene model prediction">
        <sequence resource="EMBL-CDS" id="AEZ55691"/>
    </conflict>
</comment>
<sequence length="776" mass="88151">MSFASNATGFRIPLTTCVYPSPILRFNAKVGSGSSYGTTEAQRNMKCVDGIGRSRVVAVAASGRTRDSNPEVESEKMKEMIRWMFRDMDDGEVSVSAYDTAWVALVEDIGGSGGPQFPTSLDWISDNQLDDGSWGDRKFVLYDRILNTLACVVALTTWKLHPHKCEKGLKFIRENIEKLDNEDEELMLVGFEVALPSLIDLAKKLGIEISDDSPCIKNIYAKRDSKLKEIPMDLLHKEPTSLLFSLEGMEGLDWEKLLTLRSEGSFLSSPSSTAYALQHTKDELCLDYLLKPVNKFNGGVPSTYPVDMFEHLWAVDRLQRLGISRYFQVEIGECLDYTFRYWTNEGISWARYTNIKDSDDTSMGFRLLRLHGYDISIDAFKAFEKGGEFWCMAGQMGHAVTGVYNLYRASQLMFPQEHILLDARNFSANFLHHKRLTNAIVDKWIISKDLPAEVGYALDVPFYASLPRLEARFFLEQYGGDDDVWIGKTLYRMLYVNSNTYLELAKLDYKHCQSVHQLEWKSMQKWYTDCNLGEFGLSEISLLLAYYIAASTAFEPEKSGERLPWATTIILVETIASQQLSNEQKREFVNEFENGSTINNRNGGRYKPRSRLVDVLINAITLVAQGRGISQQLSNAWQKWLKTWEGGGHQGEAEARLLIHTLHLSSGLDESSFSHPKYQQLLEVTSKVCHQLRLFQNRKVYDAQGCTSRLVTGTTFQTEAGMQELVKLVFPKTSDDMTSATKQSFFNIARSFYYTAYCHEGAIDSHIDKVLFEKIV</sequence>
<accession>A0A0U2D9C5</accession>
<accession>H6VLG6</accession>
<accession>H6VLG7</accession>
<organism>
    <name type="scientific">Salvia miltiorrhiza</name>
    <name type="common">Chinese sage</name>
    <dbReference type="NCBI Taxonomy" id="226208"/>
    <lineage>
        <taxon>Eukaryota</taxon>
        <taxon>Viridiplantae</taxon>
        <taxon>Streptophyta</taxon>
        <taxon>Embryophyta</taxon>
        <taxon>Tracheophyta</taxon>
        <taxon>Spermatophyta</taxon>
        <taxon>Magnoliopsida</taxon>
        <taxon>eudicotyledons</taxon>
        <taxon>Gunneridae</taxon>
        <taxon>Pentapetalae</taxon>
        <taxon>asterids</taxon>
        <taxon>lamiids</taxon>
        <taxon>Lamiales</taxon>
        <taxon>Lamiaceae</taxon>
        <taxon>Nepetoideae</taxon>
        <taxon>Mentheae</taxon>
        <taxon>Salviinae</taxon>
        <taxon>Salvia</taxon>
        <taxon>Salvia incertae sedis</taxon>
    </lineage>
</organism>
<feature type="transit peptide" description="Chloroplast" evidence="4">
    <location>
        <begin position="1"/>
        <end position="60"/>
    </location>
</feature>
<feature type="chain" id="PRO_0000449934" description="Ent-8-alpha-hydroxylabd-13-en-15-yl diphosphate synthase CPS4, chloroplastic">
    <location>
        <begin position="61"/>
        <end position="776"/>
    </location>
</feature>
<feature type="short sequence motif" description="DXDD motif" evidence="7">
    <location>
        <begin position="357"/>
        <end position="360"/>
    </location>
</feature>
<feature type="binding site" evidence="2">
    <location>
        <position position="226"/>
    </location>
    <ligand>
        <name>substrate</name>
    </ligand>
</feature>
<feature type="binding site" evidence="1">
    <location>
        <position position="357"/>
    </location>
    <ligand>
        <name>Mg(2+)</name>
        <dbReference type="ChEBI" id="CHEBI:18420"/>
    </ligand>
</feature>
<feature type="binding site" evidence="1">
    <location>
        <position position="359"/>
    </location>
    <ligand>
        <name>Mg(2+)</name>
        <dbReference type="ChEBI" id="CHEBI:18420"/>
    </ligand>
</feature>
<feature type="binding site" evidence="2">
    <location>
        <position position="443"/>
    </location>
    <ligand>
        <name>substrate</name>
    </ligand>
</feature>
<feature type="sequence conflict" description="In Ref. 1; AKN91186." ref="1">
    <original>TF</original>
    <variation>VY</variation>
    <location>
        <begin position="338"/>
        <end position="339"/>
    </location>
</feature>
<feature type="sequence conflict" description="In Ref. 1; AKN91186." ref="1">
    <original>I</original>
    <variation>R</variation>
    <location>
        <position position="540"/>
    </location>
</feature>
<feature type="sequence conflict" description="In Ref. 1; AKN91186." ref="1">
    <original>P</original>
    <variation>A</variation>
    <location>
        <position position="564"/>
    </location>
</feature>
<gene>
    <name evidence="6" type="primary">CPS4</name>
</gene>
<evidence type="ECO:0000250" key="1">
    <source>
        <dbReference type="UniProtKB" id="C7BKP9"/>
    </source>
</evidence>
<evidence type="ECO:0000250" key="2">
    <source>
        <dbReference type="UniProtKB" id="Q38802"/>
    </source>
</evidence>
<evidence type="ECO:0000250" key="3">
    <source>
        <dbReference type="UniProtKB" id="Q40577"/>
    </source>
</evidence>
<evidence type="ECO:0000255" key="4"/>
<evidence type="ECO:0000269" key="5">
    <source>
    </source>
</evidence>
<evidence type="ECO:0000303" key="6">
    <source>
    </source>
</evidence>
<evidence type="ECO:0000305" key="7"/>
<protein>
    <recommendedName>
        <fullName evidence="7">Ent-8-alpha-hydroxylabd-13-en-15-yl diphosphate synthase CPS4, chloroplastic</fullName>
        <ecNumber evidence="5">4.2.1.173</ecNumber>
    </recommendedName>
    <alternativeName>
        <fullName evidence="6">Copalyl diphosphate synthase 4</fullName>
    </alternativeName>
</protein>
<dbReference type="EC" id="4.2.1.173" evidence="5"/>
<dbReference type="EMBL" id="KP063138">
    <property type="protein sequence ID" value="AKN91186.1"/>
    <property type="molecule type" value="mRNA"/>
</dbReference>
<dbReference type="EMBL" id="JN831120">
    <property type="protein sequence ID" value="AEZ55690.1"/>
    <property type="molecule type" value="Genomic_DNA"/>
</dbReference>
<dbReference type="EMBL" id="JN831120">
    <property type="protein sequence ID" value="AEZ55691.1"/>
    <property type="status" value="ALT_SEQ"/>
    <property type="molecule type" value="Genomic_DNA"/>
</dbReference>
<dbReference type="SMR" id="A0A0U2D9C5"/>
<dbReference type="KEGG" id="ag:AKN91186"/>
<dbReference type="UniPathway" id="UPA00213"/>
<dbReference type="GO" id="GO:0009507">
    <property type="term" value="C:chloroplast"/>
    <property type="evidence" value="ECO:0007669"/>
    <property type="project" value="UniProtKB-SubCell"/>
</dbReference>
<dbReference type="GO" id="GO:0000287">
    <property type="term" value="F:magnesium ion binding"/>
    <property type="evidence" value="ECO:0007669"/>
    <property type="project" value="TreeGrafter"/>
</dbReference>
<dbReference type="GO" id="GO:0010333">
    <property type="term" value="F:terpene synthase activity"/>
    <property type="evidence" value="ECO:0007669"/>
    <property type="project" value="InterPro"/>
</dbReference>
<dbReference type="GO" id="GO:0009686">
    <property type="term" value="P:gibberellin biosynthetic process"/>
    <property type="evidence" value="ECO:0007669"/>
    <property type="project" value="TreeGrafter"/>
</dbReference>
<dbReference type="FunFam" id="1.50.10.130:FF:000002">
    <property type="entry name" value="Ent-copalyl diphosphate synthase, chloroplastic"/>
    <property type="match status" value="1"/>
</dbReference>
<dbReference type="Gene3D" id="1.50.10.160">
    <property type="match status" value="1"/>
</dbReference>
<dbReference type="Gene3D" id="1.10.600.10">
    <property type="entry name" value="Farnesyl Diphosphate Synthase"/>
    <property type="match status" value="1"/>
</dbReference>
<dbReference type="Gene3D" id="1.50.10.130">
    <property type="entry name" value="Terpene synthase, N-terminal domain"/>
    <property type="match status" value="1"/>
</dbReference>
<dbReference type="InterPro" id="IPR008949">
    <property type="entry name" value="Isoprenoid_synthase_dom_sf"/>
</dbReference>
<dbReference type="InterPro" id="IPR001906">
    <property type="entry name" value="Terpene_synth_N"/>
</dbReference>
<dbReference type="InterPro" id="IPR036965">
    <property type="entry name" value="Terpene_synth_N_sf"/>
</dbReference>
<dbReference type="InterPro" id="IPR050148">
    <property type="entry name" value="Terpene_synthase-like"/>
</dbReference>
<dbReference type="InterPro" id="IPR008930">
    <property type="entry name" value="Terpenoid_cyclase/PrenylTrfase"/>
</dbReference>
<dbReference type="PANTHER" id="PTHR31739">
    <property type="entry name" value="ENT-COPALYL DIPHOSPHATE SYNTHASE, CHLOROPLASTIC"/>
    <property type="match status" value="1"/>
</dbReference>
<dbReference type="PANTHER" id="PTHR31739:SF4">
    <property type="entry name" value="ENT-COPALYL DIPHOSPHATE SYNTHASE, CHLOROPLASTIC"/>
    <property type="match status" value="1"/>
</dbReference>
<dbReference type="Pfam" id="PF01397">
    <property type="entry name" value="Terpene_synth"/>
    <property type="match status" value="1"/>
</dbReference>
<dbReference type="SFLD" id="SFLDG01014">
    <property type="entry name" value="Terpene_Cyclase_Like_1_N-term"/>
    <property type="match status" value="1"/>
</dbReference>
<dbReference type="SFLD" id="SFLDG01605">
    <property type="entry name" value="Terpene_Cyclase_Like_1_N-term"/>
    <property type="match status" value="1"/>
</dbReference>
<dbReference type="SUPFAM" id="SSF48239">
    <property type="entry name" value="Terpenoid cyclases/Protein prenyltransferases"/>
    <property type="match status" value="2"/>
</dbReference>
<dbReference type="SUPFAM" id="SSF48576">
    <property type="entry name" value="Terpenoid synthases"/>
    <property type="match status" value="1"/>
</dbReference>
<proteinExistence type="evidence at protein level"/>
<name>CPS4_SALMI</name>